<proteinExistence type="inferred from homology"/>
<organism>
    <name type="scientific">Solanum lycopersicum</name>
    <name type="common">Tomato</name>
    <name type="synonym">Lycopersicon esculentum</name>
    <dbReference type="NCBI Taxonomy" id="4081"/>
    <lineage>
        <taxon>Eukaryota</taxon>
        <taxon>Viridiplantae</taxon>
        <taxon>Streptophyta</taxon>
        <taxon>Embryophyta</taxon>
        <taxon>Tracheophyta</taxon>
        <taxon>Spermatophyta</taxon>
        <taxon>Magnoliopsida</taxon>
        <taxon>eudicotyledons</taxon>
        <taxon>Gunneridae</taxon>
        <taxon>Pentapetalae</taxon>
        <taxon>asterids</taxon>
        <taxon>lamiids</taxon>
        <taxon>Solanales</taxon>
        <taxon>Solanaceae</taxon>
        <taxon>Solanoideae</taxon>
        <taxon>Solaneae</taxon>
        <taxon>Solanum</taxon>
        <taxon>Solanum subgen. Lycopersicon</taxon>
    </lineage>
</organism>
<reference key="1">
    <citation type="submission" date="2000-07" db="EMBL/GenBank/DDBJ databases">
        <title>Endo-beta-mannanase gene sequence.</title>
        <authorList>
            <person name="Banik M."/>
            <person name="Bewley D."/>
        </authorList>
    </citation>
    <scope>NUCLEOTIDE SEQUENCE [GENOMIC DNA]</scope>
</reference>
<accession>Q9FUQ6</accession>
<gene>
    <name type="primary">MAN3</name>
</gene>
<keyword id="KW-0326">Glycosidase</keyword>
<keyword id="KW-0378">Hydrolase</keyword>
<keyword id="KW-1185">Reference proteome</keyword>
<keyword id="KW-0964">Secreted</keyword>
<keyword id="KW-0732">Signal</keyword>
<comment type="catalytic activity">
    <reaction>
        <text>Random hydrolysis of (1-&gt;4)-beta-D-mannosidic linkages in mannans, galactomannans and glucomannans.</text>
        <dbReference type="EC" id="3.2.1.78"/>
    </reaction>
</comment>
<comment type="subcellular location">
    <subcellularLocation>
        <location evidence="4">Secreted</location>
    </subcellularLocation>
</comment>
<comment type="similarity">
    <text evidence="4">Belongs to the glycosyl hydrolase 5 (cellulase A) family.</text>
</comment>
<dbReference type="EC" id="3.2.1.78"/>
<dbReference type="EMBL" id="AF290893">
    <property type="protein sequence ID" value="AAG14352.1"/>
    <property type="molecule type" value="Genomic_DNA"/>
</dbReference>
<dbReference type="SMR" id="Q9FUQ6"/>
<dbReference type="STRING" id="4081.Q9FUQ6"/>
<dbReference type="CAZy" id="GH5">
    <property type="family name" value="Glycoside Hydrolase Family 5"/>
</dbReference>
<dbReference type="InParanoid" id="Q9FUQ6"/>
<dbReference type="Proteomes" id="UP000004994">
    <property type="component" value="Unplaced"/>
</dbReference>
<dbReference type="ExpressionAtlas" id="Q9FUQ6">
    <property type="expression patterns" value="baseline"/>
</dbReference>
<dbReference type="GO" id="GO:0005576">
    <property type="term" value="C:extracellular region"/>
    <property type="evidence" value="ECO:0007669"/>
    <property type="project" value="UniProtKB-SubCell"/>
</dbReference>
<dbReference type="GO" id="GO:0016985">
    <property type="term" value="F:mannan endo-1,4-beta-mannosidase activity"/>
    <property type="evidence" value="ECO:0000318"/>
    <property type="project" value="GO_Central"/>
</dbReference>
<dbReference type="GO" id="GO:0000272">
    <property type="term" value="P:polysaccharide catabolic process"/>
    <property type="evidence" value="ECO:0007669"/>
    <property type="project" value="InterPro"/>
</dbReference>
<dbReference type="FunFam" id="3.20.20.80:FF:000012">
    <property type="entry name" value="Mannan endo-1,4-beta-mannosidase 6"/>
    <property type="match status" value="1"/>
</dbReference>
<dbReference type="Gene3D" id="3.20.20.80">
    <property type="entry name" value="Glycosidases"/>
    <property type="match status" value="1"/>
</dbReference>
<dbReference type="InterPro" id="IPR001547">
    <property type="entry name" value="Glyco_hydro_5"/>
</dbReference>
<dbReference type="InterPro" id="IPR017853">
    <property type="entry name" value="Glycoside_hydrolase_SF"/>
</dbReference>
<dbReference type="InterPro" id="IPR045053">
    <property type="entry name" value="MAN-like"/>
</dbReference>
<dbReference type="PANTHER" id="PTHR31451">
    <property type="match status" value="1"/>
</dbReference>
<dbReference type="PANTHER" id="PTHR31451:SF55">
    <property type="entry name" value="MANNAN ENDO-1,4-BETA-MANNOSIDASE 1"/>
    <property type="match status" value="1"/>
</dbReference>
<dbReference type="Pfam" id="PF00150">
    <property type="entry name" value="Cellulase"/>
    <property type="match status" value="1"/>
</dbReference>
<dbReference type="SUPFAM" id="SSF51445">
    <property type="entry name" value="(Trans)glycosidases"/>
    <property type="match status" value="1"/>
</dbReference>
<protein>
    <recommendedName>
        <fullName>Mannan endo-1,4-beta-mannosidase 3</fullName>
        <ecNumber>3.2.1.78</ecNumber>
    </recommendedName>
    <alternativeName>
        <fullName>Beta-mannanase 3</fullName>
    </alternativeName>
    <alternativeName>
        <fullName>Endo-beta-1,4-mannanase 3</fullName>
    </alternativeName>
    <alternativeName>
        <fullName>LeMAN3</fullName>
    </alternativeName>
</protein>
<feature type="signal peptide" evidence="3">
    <location>
        <begin position="1"/>
        <end position="24"/>
    </location>
</feature>
<feature type="chain" id="PRO_5000058494" description="Mannan endo-1,4-beta-mannosidase 3">
    <location>
        <begin position="25"/>
        <end position="401"/>
    </location>
</feature>
<feature type="active site" description="Proton donor" evidence="2">
    <location>
        <position position="199"/>
    </location>
</feature>
<feature type="active site" description="Nucleophile" evidence="2">
    <location>
        <position position="317"/>
    </location>
</feature>
<feature type="binding site" evidence="1">
    <location>
        <position position="84"/>
    </location>
    <ligand>
        <name>substrate</name>
    </ligand>
</feature>
<feature type="binding site" evidence="1">
    <location>
        <position position="198"/>
    </location>
    <ligand>
        <name>substrate</name>
    </ligand>
</feature>
<feature type="binding site" evidence="1">
    <location>
        <position position="277"/>
    </location>
    <ligand>
        <name>substrate</name>
    </ligand>
</feature>
<feature type="binding site" evidence="1">
    <location>
        <position position="356"/>
    </location>
    <ligand>
        <name>substrate</name>
    </ligand>
</feature>
<name>MAN3_SOLLC</name>
<evidence type="ECO:0000250" key="1">
    <source>
        <dbReference type="UniProtKB" id="B4XC07"/>
    </source>
</evidence>
<evidence type="ECO:0000250" key="2">
    <source>
        <dbReference type="UniProtKB" id="Q99036"/>
    </source>
</evidence>
<evidence type="ECO:0000255" key="3"/>
<evidence type="ECO:0000305" key="4"/>
<sequence length="401" mass="45206">MSYTHRRSCISGLFLLLLALSCEANSGFIGVKDSHFELNGSPFLFNGFNSYWLMHVAADPAERYKVTEVLKDASTAGLSVCRTWAFSDGGDRALQISPGVYDERVFQGLDFVIAEAKKYGVRLILSFVNQWNDFGGKAEYVWWARNAGVQISNDDEFYTHPILKKYLKNHIEVVTRLNSITKVAYKDDATIMAWELMNEPRDQADYSGKTVNVGWVQEMASFVKSLDNKHLLEVGMEGFYGDSIPERKLVNPGYQVGTDFISNHLINEIDFATIHAYTDQWLSGQSDEAQLAWMEKWIRSHWEDARNILKKPLVLAEFGKSSRSGEGSRDIFMSSVYRNVYNLAKEGGTMGGSLVWQLMAHGMENYDDGYSIVLGLNPSTTQIISNQAHIMTALAHSLNHE</sequence>